<organism>
    <name type="scientific">Plasmodium falciparum (isolate 3D7)</name>
    <dbReference type="NCBI Taxonomy" id="36329"/>
    <lineage>
        <taxon>Eukaryota</taxon>
        <taxon>Sar</taxon>
        <taxon>Alveolata</taxon>
        <taxon>Apicomplexa</taxon>
        <taxon>Aconoidasida</taxon>
        <taxon>Haemosporida</taxon>
        <taxon>Plasmodiidae</taxon>
        <taxon>Plasmodium</taxon>
        <taxon>Plasmodium (Laverania)</taxon>
    </lineage>
</organism>
<sequence length="186" mass="22173">MKRKVPNIIITGVPGSGKSTLCEELKEIINKELLKRNDMEGFEMTHLNLSNIIKDERLYKEFDDELDASIYSEELLNEYLKKKYKLEKGGYIIDFHDINFVKDVDIIDKIFLLTIQTNFLYERLEKRNYTKEKIKNNIECEIFQVIKEDILDHFPNTNILQEIENNDLQQYDNNLSIIKNWVLSYI</sequence>
<reference key="1">
    <citation type="journal article" date="2002" name="Nature">
        <title>Genome sequence of the human malaria parasite Plasmodium falciparum.</title>
        <authorList>
            <person name="Gardner M.J."/>
            <person name="Hall N."/>
            <person name="Fung E."/>
            <person name="White O."/>
            <person name="Berriman M."/>
            <person name="Hyman R.W."/>
            <person name="Carlton J.M."/>
            <person name="Pain A."/>
            <person name="Nelson K.E."/>
            <person name="Bowman S."/>
            <person name="Paulsen I.T."/>
            <person name="James K.D."/>
            <person name="Eisen J.A."/>
            <person name="Rutherford K.M."/>
            <person name="Salzberg S.L."/>
            <person name="Craig A."/>
            <person name="Kyes S."/>
            <person name="Chan M.-S."/>
            <person name="Nene V."/>
            <person name="Shallom S.J."/>
            <person name="Suh B."/>
            <person name="Peterson J."/>
            <person name="Angiuoli S."/>
            <person name="Pertea M."/>
            <person name="Allen J."/>
            <person name="Selengut J."/>
            <person name="Haft D."/>
            <person name="Mather M.W."/>
            <person name="Vaidya A.B."/>
            <person name="Martin D.M.A."/>
            <person name="Fairlamb A.H."/>
            <person name="Fraunholz M.J."/>
            <person name="Roos D.S."/>
            <person name="Ralph S.A."/>
            <person name="McFadden G.I."/>
            <person name="Cummings L.M."/>
            <person name="Subramanian G.M."/>
            <person name="Mungall C."/>
            <person name="Venter J.C."/>
            <person name="Carucci D.J."/>
            <person name="Hoffman S.L."/>
            <person name="Newbold C."/>
            <person name="Davis R.W."/>
            <person name="Fraser C.M."/>
            <person name="Barrell B.G."/>
        </authorList>
    </citation>
    <scope>NUCLEOTIDE SEQUENCE [LARGE SCALE GENOMIC DNA]</scope>
    <source>
        <strain>3D7</strain>
    </source>
</reference>
<reference key="2">
    <citation type="journal article" date="2002" name="Nature">
        <title>Sequence of Plasmodium falciparum chromosomes 1, 3-9 and 13.</title>
        <authorList>
            <person name="Hall N."/>
            <person name="Pain A."/>
            <person name="Berriman M."/>
            <person name="Churcher C.M."/>
            <person name="Harris B."/>
            <person name="Harris D."/>
            <person name="Mungall K.L."/>
            <person name="Bowman S."/>
            <person name="Atkin R."/>
            <person name="Baker S."/>
            <person name="Barron A."/>
            <person name="Brooks K."/>
            <person name="Buckee C.O."/>
            <person name="Burrows C."/>
            <person name="Cherevach I."/>
            <person name="Chillingworth C."/>
            <person name="Chillingworth T."/>
            <person name="Christodoulou Z."/>
            <person name="Clark L."/>
            <person name="Clark R."/>
            <person name="Corton C."/>
            <person name="Cronin A."/>
            <person name="Davies R.M."/>
            <person name="Davis P."/>
            <person name="Dear P."/>
            <person name="Dearden F."/>
            <person name="Doggett J."/>
            <person name="Feltwell T."/>
            <person name="Goble A."/>
            <person name="Goodhead I."/>
            <person name="Gwilliam R."/>
            <person name="Hamlin N."/>
            <person name="Hance Z."/>
            <person name="Harper D."/>
            <person name="Hauser H."/>
            <person name="Hornsby T."/>
            <person name="Holroyd S."/>
            <person name="Horrocks P."/>
            <person name="Humphray S."/>
            <person name="Jagels K."/>
            <person name="James K.D."/>
            <person name="Johnson D."/>
            <person name="Kerhornou A."/>
            <person name="Knights A."/>
            <person name="Konfortov B."/>
            <person name="Kyes S."/>
            <person name="Larke N."/>
            <person name="Lawson D."/>
            <person name="Lennard N."/>
            <person name="Line A."/>
            <person name="Maddison M."/>
            <person name="Mclean J."/>
            <person name="Mooney P."/>
            <person name="Moule S."/>
            <person name="Murphy L."/>
            <person name="Oliver K."/>
            <person name="Ormond D."/>
            <person name="Price C."/>
            <person name="Quail M.A."/>
            <person name="Rabbinowitsch E."/>
            <person name="Rajandream M.A."/>
            <person name="Rutter S."/>
            <person name="Rutherford K.M."/>
            <person name="Sanders M."/>
            <person name="Simmonds M."/>
            <person name="Seeger K."/>
            <person name="Sharp S."/>
            <person name="Smith R."/>
            <person name="Squares R."/>
            <person name="Squares S."/>
            <person name="Stevens K."/>
            <person name="Taylor K."/>
            <person name="Tivey A."/>
            <person name="Unwin L."/>
            <person name="Whitehead S."/>
            <person name="Woodward J.R."/>
            <person name="Sulston J.E."/>
            <person name="Craig A."/>
            <person name="Newbold C."/>
            <person name="Barrell B.G."/>
        </authorList>
    </citation>
    <scope>NUCLEOTIDE SEQUENCE [LARGE SCALE GENOMIC DNA]</scope>
    <source>
        <strain>3D7</strain>
    </source>
</reference>
<reference key="3">
    <citation type="journal article" date="2012" name="FEBS Lett.">
        <title>Subcellular localization of adenylate kinases in Plasmodium falciparum.</title>
        <authorList>
            <person name="Ma J."/>
            <person name="Rahlfs S."/>
            <person name="Jortzik E."/>
            <person name="Schirmer R.H."/>
            <person name="Przyborski J.M."/>
            <person name="Becker K."/>
        </authorList>
    </citation>
    <scope>CATALYTIC ACTIVITY</scope>
    <scope>SUBCELLULAR LOCATION</scope>
</reference>
<name>KAD6_PLAF7</name>
<keyword id="KW-0067">ATP-binding</keyword>
<keyword id="KW-0963">Cytoplasm</keyword>
<keyword id="KW-0418">Kinase</keyword>
<keyword id="KW-0547">Nucleotide-binding</keyword>
<keyword id="KW-0539">Nucleus</keyword>
<keyword id="KW-1185">Reference proteome</keyword>
<keyword id="KW-0690">Ribosome biogenesis</keyword>
<keyword id="KW-0698">rRNA processing</keyword>
<keyword id="KW-0808">Transferase</keyword>
<proteinExistence type="evidence at protein level"/>
<dbReference type="EC" id="2.7.4.3" evidence="1"/>
<dbReference type="EMBL" id="AL844501">
    <property type="protein sequence ID" value="CAD49066.1"/>
    <property type="molecule type" value="Genomic_DNA"/>
</dbReference>
<dbReference type="RefSeq" id="XP_001351038.1">
    <property type="nucleotide sequence ID" value="XM_001351002.1"/>
</dbReference>
<dbReference type="SMR" id="Q8I236"/>
<dbReference type="FunCoup" id="Q8I236">
    <property type="interactions" value="372"/>
</dbReference>
<dbReference type="STRING" id="36329.Q8I236"/>
<dbReference type="PaxDb" id="5833-PFA0530c"/>
<dbReference type="EnsemblProtists" id="CAD49066">
    <property type="protein sequence ID" value="CAD49066"/>
    <property type="gene ID" value="PF3D7_0110900"/>
</dbReference>
<dbReference type="KEGG" id="pfa:PF3D7_0110900"/>
<dbReference type="VEuPathDB" id="PlasmoDB:PF3D7_0110900"/>
<dbReference type="HOGENOM" id="CLU_079096_3_1_1"/>
<dbReference type="InParanoid" id="Q8I236"/>
<dbReference type="OMA" id="QCEIFGT"/>
<dbReference type="OrthoDB" id="10251185at2759"/>
<dbReference type="PhylomeDB" id="Q8I236"/>
<dbReference type="Reactome" id="R-PFA-499943">
    <property type="pathway name" value="Interconversion of nucleotide di- and triphosphates"/>
</dbReference>
<dbReference type="Proteomes" id="UP000001450">
    <property type="component" value="Chromosome 1"/>
</dbReference>
<dbReference type="GO" id="GO:0005737">
    <property type="term" value="C:cytoplasm"/>
    <property type="evidence" value="ECO:0000318"/>
    <property type="project" value="GO_Central"/>
</dbReference>
<dbReference type="GO" id="GO:0005829">
    <property type="term" value="C:cytosol"/>
    <property type="evidence" value="ECO:0000314"/>
    <property type="project" value="CACAO"/>
</dbReference>
<dbReference type="GO" id="GO:0005634">
    <property type="term" value="C:nucleus"/>
    <property type="evidence" value="ECO:0000318"/>
    <property type="project" value="GO_Central"/>
</dbReference>
<dbReference type="GO" id="GO:0004017">
    <property type="term" value="F:adenylate kinase activity"/>
    <property type="evidence" value="ECO:0000318"/>
    <property type="project" value="GO_Central"/>
</dbReference>
<dbReference type="GO" id="GO:0005524">
    <property type="term" value="F:ATP binding"/>
    <property type="evidence" value="ECO:0000318"/>
    <property type="project" value="GO_Central"/>
</dbReference>
<dbReference type="GO" id="GO:0016887">
    <property type="term" value="F:ATP hydrolysis activity"/>
    <property type="evidence" value="ECO:0007669"/>
    <property type="project" value="UniProtKB-UniRule"/>
</dbReference>
<dbReference type="GO" id="GO:0042274">
    <property type="term" value="P:ribosomal small subunit biogenesis"/>
    <property type="evidence" value="ECO:0007669"/>
    <property type="project" value="UniProtKB-UniRule"/>
</dbReference>
<dbReference type="GO" id="GO:0006364">
    <property type="term" value="P:rRNA processing"/>
    <property type="evidence" value="ECO:0007669"/>
    <property type="project" value="UniProtKB-KW"/>
</dbReference>
<dbReference type="FunFam" id="3.40.50.300:FF:002089">
    <property type="entry name" value="Adenylate kinase isoenzyme 6 homolog"/>
    <property type="match status" value="1"/>
</dbReference>
<dbReference type="Gene3D" id="3.40.50.300">
    <property type="entry name" value="P-loop containing nucleotide triphosphate hydrolases"/>
    <property type="match status" value="1"/>
</dbReference>
<dbReference type="HAMAP" id="MF_00039">
    <property type="entry name" value="Adenylate_kinase_AK6"/>
    <property type="match status" value="1"/>
</dbReference>
<dbReference type="InterPro" id="IPR020618">
    <property type="entry name" value="Adenyl_kinase_AK6"/>
</dbReference>
<dbReference type="InterPro" id="IPR027417">
    <property type="entry name" value="P-loop_NTPase"/>
</dbReference>
<dbReference type="PANTHER" id="PTHR12595:SF0">
    <property type="entry name" value="ADENYLATE KINASE ISOENZYME 6"/>
    <property type="match status" value="1"/>
</dbReference>
<dbReference type="PANTHER" id="PTHR12595">
    <property type="entry name" value="POS9-ACTIVATING FACTOR FAP7-RELATED"/>
    <property type="match status" value="1"/>
</dbReference>
<dbReference type="Pfam" id="PF13238">
    <property type="entry name" value="AAA_18"/>
    <property type="match status" value="1"/>
</dbReference>
<dbReference type="SUPFAM" id="SSF52540">
    <property type="entry name" value="P-loop containing nucleoside triphosphate hydrolases"/>
    <property type="match status" value="1"/>
</dbReference>
<evidence type="ECO:0000255" key="1">
    <source>
        <dbReference type="HAMAP-Rule" id="MF_03173"/>
    </source>
</evidence>
<evidence type="ECO:0000269" key="2">
    <source>
    </source>
</evidence>
<gene>
    <name type="ORF">PFA_0530c</name>
</gene>
<comment type="function">
    <text evidence="1">Broad-specificity nucleoside monophosphate (NMP) kinase that catalyzes the reversible transfer of the terminal phosphate group between nucleoside triphosphates and monophosphates. Also has ATPase activity. Involved in the late cytoplasmic maturation steps of the 40S ribosomal particles, specifically 18S rRNA maturation. While NMP activity is not required for ribosome maturation, ATPase activity is. Associates transiently with small ribosomal subunit protein uS11. ATP hydrolysis breaks the interaction with uS11. May temporarily remove uS11 from the ribosome to enable a conformational change of the ribosomal RNA that is needed for the final maturation step of the small ribosomal subunit. Its NMP activity may have a role in nuclear energy homeostasis.</text>
</comment>
<comment type="catalytic activity">
    <reaction evidence="1 2">
        <text>AMP + ATP = 2 ADP</text>
        <dbReference type="Rhea" id="RHEA:12973"/>
        <dbReference type="ChEBI" id="CHEBI:30616"/>
        <dbReference type="ChEBI" id="CHEBI:456215"/>
        <dbReference type="ChEBI" id="CHEBI:456216"/>
        <dbReference type="EC" id="2.7.4.3"/>
    </reaction>
</comment>
<comment type="catalytic activity">
    <reaction evidence="1">
        <text>ATP + H2O = ADP + phosphate + H(+)</text>
        <dbReference type="Rhea" id="RHEA:13065"/>
        <dbReference type="ChEBI" id="CHEBI:15377"/>
        <dbReference type="ChEBI" id="CHEBI:15378"/>
        <dbReference type="ChEBI" id="CHEBI:30616"/>
        <dbReference type="ChEBI" id="CHEBI:43474"/>
        <dbReference type="ChEBI" id="CHEBI:456216"/>
    </reaction>
</comment>
<comment type="subunit">
    <text evidence="1">Monomer and homodimer. Interacts with small ribosomal subunit protein uS11. Not a structural component of 43S pre-ribosomes, but transiently interacts with them by binding to uS11.</text>
</comment>
<comment type="subcellular location">
    <subcellularLocation>
        <location evidence="1 2">Cytoplasm</location>
    </subcellularLocation>
    <subcellularLocation>
        <location evidence="1">Nucleus</location>
    </subcellularLocation>
</comment>
<comment type="similarity">
    <text evidence="1">Belongs to the adenylate kinase family. AK6 subfamily.</text>
</comment>
<feature type="chain" id="PRO_0000422288" description="Adenylate kinase isoenzyme 6 homolog">
    <location>
        <begin position="1"/>
        <end position="186"/>
    </location>
</feature>
<feature type="region of interest" description="NMPbind" evidence="1">
    <location>
        <begin position="48"/>
        <end position="71"/>
    </location>
</feature>
<feature type="region of interest" description="LID" evidence="1">
    <location>
        <begin position="126"/>
        <end position="136"/>
    </location>
</feature>
<feature type="binding site" evidence="1">
    <location>
        <position position="15"/>
    </location>
    <ligand>
        <name>ATP</name>
        <dbReference type="ChEBI" id="CHEBI:30616"/>
    </ligand>
</feature>
<feature type="binding site" evidence="1">
    <location>
        <position position="17"/>
    </location>
    <ligand>
        <name>ATP</name>
        <dbReference type="ChEBI" id="CHEBI:30616"/>
    </ligand>
</feature>
<feature type="binding site" evidence="1">
    <location>
        <position position="18"/>
    </location>
    <ligand>
        <name>ATP</name>
        <dbReference type="ChEBI" id="CHEBI:30616"/>
    </ligand>
</feature>
<feature type="binding site" evidence="1">
    <location>
        <position position="19"/>
    </location>
    <ligand>
        <name>ATP</name>
        <dbReference type="ChEBI" id="CHEBI:30616"/>
    </ligand>
</feature>
<feature type="binding site" evidence="1">
    <location>
        <position position="20"/>
    </location>
    <ligand>
        <name>ATP</name>
        <dbReference type="ChEBI" id="CHEBI:30616"/>
    </ligand>
</feature>
<feature type="binding site" evidence="1">
    <location>
        <position position="127"/>
    </location>
    <ligand>
        <name>ATP</name>
        <dbReference type="ChEBI" id="CHEBI:30616"/>
    </ligand>
</feature>
<protein>
    <recommendedName>
        <fullName evidence="1">Adenylate kinase isoenzyme 6 homolog</fullName>
        <shortName evidence="1">AK6</shortName>
        <ecNumber evidence="1">2.7.4.3</ecNumber>
    </recommendedName>
    <alternativeName>
        <fullName evidence="1">Dual activity adenylate kinase/ATPase</fullName>
        <shortName evidence="1">AK/ATPase</shortName>
    </alternativeName>
    <alternativeName>
        <fullName>PfAKLP1</fullName>
    </alternativeName>
</protein>
<accession>Q8I236</accession>